<protein>
    <recommendedName>
        <fullName evidence="1">Small ribosomal subunit biogenesis GTPase RsgA</fullName>
        <ecNumber evidence="1">3.6.1.-</ecNumber>
    </recommendedName>
</protein>
<accession>Q46I43</accession>
<evidence type="ECO:0000255" key="1">
    <source>
        <dbReference type="HAMAP-Rule" id="MF_01820"/>
    </source>
</evidence>
<evidence type="ECO:0000255" key="2">
    <source>
        <dbReference type="PROSITE-ProRule" id="PRU01058"/>
    </source>
</evidence>
<comment type="function">
    <text evidence="1">One of several proteins that assist in the late maturation steps of the functional core of the 30S ribosomal subunit. Helps release RbfA from mature subunits. May play a role in the assembly of ribosomal proteins into the subunit. Circularly permuted GTPase that catalyzes slow GTP hydrolysis, GTPase activity is stimulated by the 30S ribosomal subunit.</text>
</comment>
<comment type="cofactor">
    <cofactor evidence="1">
        <name>Zn(2+)</name>
        <dbReference type="ChEBI" id="CHEBI:29105"/>
    </cofactor>
    <text evidence="1">Binds 1 zinc ion per subunit.</text>
</comment>
<comment type="subunit">
    <text evidence="1">Monomer. Associates with 30S ribosomal subunit, binds 16S rRNA.</text>
</comment>
<comment type="subcellular location">
    <subcellularLocation>
        <location evidence="1">Cytoplasm</location>
    </subcellularLocation>
</comment>
<comment type="similarity">
    <text evidence="1">Belongs to the TRAFAC class YlqF/YawG GTPase family. RsgA subfamily.</text>
</comment>
<sequence>MNKNKSNKLKGIVVALKANFLIVEIDHKNFKDHSFDQFYGKIRLLCIRRSKLNYQGLFIDVGDIVCVESIDYKNKRAVVSDVEPRQSFLKRPAVANVTLVSICISADEPLFDMEQTSRFLLTAECANIEPLIILTKIDLITKNDLILYINKFKSWGYDCIPVSIHNSQGIDSLIERLRKTKLTVLAGPSGVGKTSLINHLIPTVSLPTSSVSKKLKRGTHTTRHVELFAIGNGSLLADTPGFNRPEIVCEPSDFAFLFPEFRTQLSNSQCKFRNCLHRDEPGCVIDKDLERYPFYRQNLEEMINSPLPYQAG</sequence>
<reference key="1">
    <citation type="journal article" date="2007" name="PLoS Genet.">
        <title>Patterns and implications of gene gain and loss in the evolution of Prochlorococcus.</title>
        <authorList>
            <person name="Kettler G.C."/>
            <person name="Martiny A.C."/>
            <person name="Huang K."/>
            <person name="Zucker J."/>
            <person name="Coleman M.L."/>
            <person name="Rodrigue S."/>
            <person name="Chen F."/>
            <person name="Lapidus A."/>
            <person name="Ferriera S."/>
            <person name="Johnson J."/>
            <person name="Steglich C."/>
            <person name="Church G.M."/>
            <person name="Richardson P."/>
            <person name="Chisholm S.W."/>
        </authorList>
    </citation>
    <scope>NUCLEOTIDE SEQUENCE [LARGE SCALE GENOMIC DNA]</scope>
    <source>
        <strain>NATL2A</strain>
    </source>
</reference>
<proteinExistence type="inferred from homology"/>
<dbReference type="EC" id="3.6.1.-" evidence="1"/>
<dbReference type="EMBL" id="CP000095">
    <property type="protein sequence ID" value="AAZ58835.1"/>
    <property type="molecule type" value="Genomic_DNA"/>
</dbReference>
<dbReference type="RefSeq" id="WP_011293979.1">
    <property type="nucleotide sequence ID" value="NC_007335.2"/>
</dbReference>
<dbReference type="SMR" id="Q46I43"/>
<dbReference type="STRING" id="59920.PMN2A_1346"/>
<dbReference type="KEGG" id="pmn:PMN2A_1346"/>
<dbReference type="HOGENOM" id="CLU_033617_2_1_3"/>
<dbReference type="OrthoDB" id="9809485at2"/>
<dbReference type="PhylomeDB" id="Q46I43"/>
<dbReference type="Proteomes" id="UP000002535">
    <property type="component" value="Chromosome"/>
</dbReference>
<dbReference type="GO" id="GO:0005737">
    <property type="term" value="C:cytoplasm"/>
    <property type="evidence" value="ECO:0007669"/>
    <property type="project" value="UniProtKB-SubCell"/>
</dbReference>
<dbReference type="GO" id="GO:0005525">
    <property type="term" value="F:GTP binding"/>
    <property type="evidence" value="ECO:0007669"/>
    <property type="project" value="UniProtKB-UniRule"/>
</dbReference>
<dbReference type="GO" id="GO:0003924">
    <property type="term" value="F:GTPase activity"/>
    <property type="evidence" value="ECO:0007669"/>
    <property type="project" value="UniProtKB-UniRule"/>
</dbReference>
<dbReference type="GO" id="GO:0046872">
    <property type="term" value="F:metal ion binding"/>
    <property type="evidence" value="ECO:0007669"/>
    <property type="project" value="UniProtKB-KW"/>
</dbReference>
<dbReference type="GO" id="GO:0019843">
    <property type="term" value="F:rRNA binding"/>
    <property type="evidence" value="ECO:0007669"/>
    <property type="project" value="UniProtKB-KW"/>
</dbReference>
<dbReference type="GO" id="GO:0042274">
    <property type="term" value="P:ribosomal small subunit biogenesis"/>
    <property type="evidence" value="ECO:0007669"/>
    <property type="project" value="UniProtKB-UniRule"/>
</dbReference>
<dbReference type="CDD" id="cd01854">
    <property type="entry name" value="YjeQ_EngC"/>
    <property type="match status" value="1"/>
</dbReference>
<dbReference type="Gene3D" id="3.40.50.300">
    <property type="entry name" value="P-loop containing nucleotide triphosphate hydrolases"/>
    <property type="match status" value="1"/>
</dbReference>
<dbReference type="Gene3D" id="1.10.40.50">
    <property type="entry name" value="Probable gtpase engc, domain 3"/>
    <property type="match status" value="1"/>
</dbReference>
<dbReference type="HAMAP" id="MF_01820">
    <property type="entry name" value="GTPase_RsgA"/>
    <property type="match status" value="1"/>
</dbReference>
<dbReference type="InterPro" id="IPR030378">
    <property type="entry name" value="G_CP_dom"/>
</dbReference>
<dbReference type="InterPro" id="IPR027417">
    <property type="entry name" value="P-loop_NTPase"/>
</dbReference>
<dbReference type="InterPro" id="IPR004881">
    <property type="entry name" value="Ribosome_biogen_GTPase_RsgA"/>
</dbReference>
<dbReference type="InterPro" id="IPR010914">
    <property type="entry name" value="RsgA_GTPase_dom"/>
</dbReference>
<dbReference type="NCBIfam" id="TIGR00157">
    <property type="entry name" value="ribosome small subunit-dependent GTPase A"/>
    <property type="match status" value="1"/>
</dbReference>
<dbReference type="PANTHER" id="PTHR32120">
    <property type="entry name" value="SMALL RIBOSOMAL SUBUNIT BIOGENESIS GTPASE RSGA"/>
    <property type="match status" value="1"/>
</dbReference>
<dbReference type="PANTHER" id="PTHR32120:SF11">
    <property type="entry name" value="SMALL RIBOSOMAL SUBUNIT BIOGENESIS GTPASE RSGA 1, MITOCHONDRIAL-RELATED"/>
    <property type="match status" value="1"/>
</dbReference>
<dbReference type="Pfam" id="PF03193">
    <property type="entry name" value="RsgA_GTPase"/>
    <property type="match status" value="1"/>
</dbReference>
<dbReference type="SUPFAM" id="SSF52540">
    <property type="entry name" value="P-loop containing nucleoside triphosphate hydrolases"/>
    <property type="match status" value="1"/>
</dbReference>
<dbReference type="PROSITE" id="PS50936">
    <property type="entry name" value="ENGC_GTPASE"/>
    <property type="match status" value="1"/>
</dbReference>
<dbReference type="PROSITE" id="PS51721">
    <property type="entry name" value="G_CP"/>
    <property type="match status" value="1"/>
</dbReference>
<gene>
    <name evidence="1" type="primary">rsgA</name>
    <name type="ordered locus">PMN2A_1346</name>
</gene>
<organism>
    <name type="scientific">Prochlorococcus marinus (strain NATL2A)</name>
    <dbReference type="NCBI Taxonomy" id="59920"/>
    <lineage>
        <taxon>Bacteria</taxon>
        <taxon>Bacillati</taxon>
        <taxon>Cyanobacteriota</taxon>
        <taxon>Cyanophyceae</taxon>
        <taxon>Synechococcales</taxon>
        <taxon>Prochlorococcaceae</taxon>
        <taxon>Prochlorococcus</taxon>
    </lineage>
</organism>
<feature type="chain" id="PRO_1000188119" description="Small ribosomal subunit biogenesis GTPase RsgA">
    <location>
        <begin position="1"/>
        <end position="312"/>
    </location>
</feature>
<feature type="domain" description="CP-type G" evidence="2">
    <location>
        <begin position="86"/>
        <end position="245"/>
    </location>
</feature>
<feature type="binding site" evidence="1">
    <location>
        <begin position="135"/>
        <end position="138"/>
    </location>
    <ligand>
        <name>GTP</name>
        <dbReference type="ChEBI" id="CHEBI:37565"/>
    </ligand>
</feature>
<feature type="binding site" evidence="1">
    <location>
        <begin position="187"/>
        <end position="195"/>
    </location>
    <ligand>
        <name>GTP</name>
        <dbReference type="ChEBI" id="CHEBI:37565"/>
    </ligand>
</feature>
<feature type="binding site" evidence="1">
    <location>
        <position position="270"/>
    </location>
    <ligand>
        <name>Zn(2+)</name>
        <dbReference type="ChEBI" id="CHEBI:29105"/>
    </ligand>
</feature>
<feature type="binding site" evidence="1">
    <location>
        <position position="275"/>
    </location>
    <ligand>
        <name>Zn(2+)</name>
        <dbReference type="ChEBI" id="CHEBI:29105"/>
    </ligand>
</feature>
<feature type="binding site" evidence="1">
    <location>
        <position position="277"/>
    </location>
    <ligand>
        <name>Zn(2+)</name>
        <dbReference type="ChEBI" id="CHEBI:29105"/>
    </ligand>
</feature>
<feature type="binding site" evidence="1">
    <location>
        <position position="283"/>
    </location>
    <ligand>
        <name>Zn(2+)</name>
        <dbReference type="ChEBI" id="CHEBI:29105"/>
    </ligand>
</feature>
<keyword id="KW-0963">Cytoplasm</keyword>
<keyword id="KW-0342">GTP-binding</keyword>
<keyword id="KW-0378">Hydrolase</keyword>
<keyword id="KW-0479">Metal-binding</keyword>
<keyword id="KW-0547">Nucleotide-binding</keyword>
<keyword id="KW-1185">Reference proteome</keyword>
<keyword id="KW-0690">Ribosome biogenesis</keyword>
<keyword id="KW-0694">RNA-binding</keyword>
<keyword id="KW-0699">rRNA-binding</keyword>
<keyword id="KW-0862">Zinc</keyword>
<name>RSGA_PROMT</name>